<sequence length="160" mass="18407">MTKKKAYKPGSATIAQNKRARHEYFIEEEFEAGLALQGWEVKSLRAGKANISDSYVMFKNGEAFLFGATITPLNVASTHVVCEPMRTRKLLLNKRELDSLFGRVNREGYTVVALSMYWKNAWVKVKIGVAKGKKDNDKRDDIRDREWKLDKARIMKHANR</sequence>
<gene>
    <name evidence="1" type="primary">smpB</name>
    <name type="ordered locus">YPN_2897</name>
    <name type="ORF">YP516_3276</name>
</gene>
<keyword id="KW-0963">Cytoplasm</keyword>
<keyword id="KW-0694">RNA-binding</keyword>
<comment type="function">
    <text evidence="1">Required for rescue of stalled ribosomes mediated by trans-translation. Binds to transfer-messenger RNA (tmRNA), required for stable association of tmRNA with ribosomes. tmRNA and SmpB together mimic tRNA shape, replacing the anticodon stem-loop with SmpB. tmRNA is encoded by the ssrA gene; the 2 termini fold to resemble tRNA(Ala) and it encodes a 'tag peptide', a short internal open reading frame. During trans-translation Ala-aminoacylated tmRNA acts like a tRNA, entering the A-site of stalled ribosomes, displacing the stalled mRNA. The ribosome then switches to translate the ORF on the tmRNA; the nascent peptide is terminated with the 'tag peptide' encoded by the tmRNA and targeted for degradation. The ribosome is freed to recommence translation, which seems to be the essential function of trans-translation.</text>
</comment>
<comment type="subcellular location">
    <subcellularLocation>
        <location evidence="1">Cytoplasm</location>
    </subcellularLocation>
    <text evidence="1">The tmRNA-SmpB complex associates with stalled 70S ribosomes.</text>
</comment>
<comment type="similarity">
    <text evidence="1">Belongs to the SmpB family.</text>
</comment>
<comment type="sequence caution" evidence="2">
    <conflict type="erroneous initiation">
        <sequence resource="EMBL-CDS" id="ABG19224"/>
    </conflict>
    <text>Extended N-terminus.</text>
</comment>
<evidence type="ECO:0000255" key="1">
    <source>
        <dbReference type="HAMAP-Rule" id="MF_00023"/>
    </source>
</evidence>
<evidence type="ECO:0000305" key="2"/>
<reference key="1">
    <citation type="journal article" date="2006" name="J. Bacteriol.">
        <title>Complete genome sequence of Yersinia pestis strains Antiqua and Nepal516: evidence of gene reduction in an emerging pathogen.</title>
        <authorList>
            <person name="Chain P.S.G."/>
            <person name="Hu P."/>
            <person name="Malfatti S.A."/>
            <person name="Radnedge L."/>
            <person name="Larimer F."/>
            <person name="Vergez L.M."/>
            <person name="Worsham P."/>
            <person name="Chu M.C."/>
            <person name="Andersen G.L."/>
        </authorList>
    </citation>
    <scope>NUCLEOTIDE SEQUENCE [LARGE SCALE GENOMIC DNA]</scope>
    <source>
        <strain>Nepal516</strain>
    </source>
</reference>
<reference key="2">
    <citation type="submission" date="2009-04" db="EMBL/GenBank/DDBJ databases">
        <title>Yersinia pestis Nepal516A whole genome shotgun sequencing project.</title>
        <authorList>
            <person name="Plunkett G. III"/>
            <person name="Anderson B.D."/>
            <person name="Baumler D.J."/>
            <person name="Burland V."/>
            <person name="Cabot E.L."/>
            <person name="Glasner J.D."/>
            <person name="Mau B."/>
            <person name="Neeno-Eckwall E."/>
            <person name="Perna N.T."/>
            <person name="Munk A.C."/>
            <person name="Tapia R."/>
            <person name="Green L.D."/>
            <person name="Rogers Y.C."/>
            <person name="Detter J.C."/>
            <person name="Bruce D.C."/>
            <person name="Brettin T.S."/>
        </authorList>
    </citation>
    <scope>NUCLEOTIDE SEQUENCE [LARGE SCALE GENOMIC DNA]</scope>
    <source>
        <strain>Nepal516</strain>
    </source>
</reference>
<organism>
    <name type="scientific">Yersinia pestis bv. Antiqua (strain Nepal516)</name>
    <dbReference type="NCBI Taxonomy" id="377628"/>
    <lineage>
        <taxon>Bacteria</taxon>
        <taxon>Pseudomonadati</taxon>
        <taxon>Pseudomonadota</taxon>
        <taxon>Gammaproteobacteria</taxon>
        <taxon>Enterobacterales</taxon>
        <taxon>Yersiniaceae</taxon>
        <taxon>Yersinia</taxon>
    </lineage>
</organism>
<accession>Q1CFK6</accession>
<accession>C4GWS1</accession>
<name>SSRP_YERPN</name>
<dbReference type="EMBL" id="CP000305">
    <property type="protein sequence ID" value="ABG19224.1"/>
    <property type="status" value="ALT_INIT"/>
    <property type="molecule type" value="Genomic_DNA"/>
</dbReference>
<dbReference type="EMBL" id="ACNQ01000017">
    <property type="protein sequence ID" value="EEO75371.1"/>
    <property type="molecule type" value="Genomic_DNA"/>
</dbReference>
<dbReference type="RefSeq" id="WP_002210714.1">
    <property type="nucleotide sequence ID" value="NZ_ACNQ01000017.1"/>
</dbReference>
<dbReference type="SMR" id="Q1CFK6"/>
<dbReference type="GeneID" id="57977237"/>
<dbReference type="KEGG" id="ypn:YPN_2897"/>
<dbReference type="HOGENOM" id="CLU_108953_3_0_6"/>
<dbReference type="Proteomes" id="UP000008936">
    <property type="component" value="Chromosome"/>
</dbReference>
<dbReference type="GO" id="GO:0005829">
    <property type="term" value="C:cytosol"/>
    <property type="evidence" value="ECO:0007669"/>
    <property type="project" value="TreeGrafter"/>
</dbReference>
<dbReference type="GO" id="GO:0003723">
    <property type="term" value="F:RNA binding"/>
    <property type="evidence" value="ECO:0007669"/>
    <property type="project" value="UniProtKB-UniRule"/>
</dbReference>
<dbReference type="GO" id="GO:0070929">
    <property type="term" value="P:trans-translation"/>
    <property type="evidence" value="ECO:0007669"/>
    <property type="project" value="UniProtKB-UniRule"/>
</dbReference>
<dbReference type="CDD" id="cd09294">
    <property type="entry name" value="SmpB"/>
    <property type="match status" value="1"/>
</dbReference>
<dbReference type="Gene3D" id="2.40.280.10">
    <property type="match status" value="1"/>
</dbReference>
<dbReference type="HAMAP" id="MF_00023">
    <property type="entry name" value="SmpB"/>
    <property type="match status" value="1"/>
</dbReference>
<dbReference type="InterPro" id="IPR023620">
    <property type="entry name" value="SmpB"/>
</dbReference>
<dbReference type="InterPro" id="IPR000037">
    <property type="entry name" value="SsrA-bd_prot"/>
</dbReference>
<dbReference type="InterPro" id="IPR020081">
    <property type="entry name" value="SsrA-bd_prot_CS"/>
</dbReference>
<dbReference type="NCBIfam" id="NF003843">
    <property type="entry name" value="PRK05422.1"/>
    <property type="match status" value="1"/>
</dbReference>
<dbReference type="NCBIfam" id="TIGR00086">
    <property type="entry name" value="smpB"/>
    <property type="match status" value="1"/>
</dbReference>
<dbReference type="PANTHER" id="PTHR30308:SF2">
    <property type="entry name" value="SSRA-BINDING PROTEIN"/>
    <property type="match status" value="1"/>
</dbReference>
<dbReference type="PANTHER" id="PTHR30308">
    <property type="entry name" value="TMRNA-BINDING COMPONENT OF TRANS-TRANSLATION TAGGING COMPLEX"/>
    <property type="match status" value="1"/>
</dbReference>
<dbReference type="Pfam" id="PF01668">
    <property type="entry name" value="SmpB"/>
    <property type="match status" value="1"/>
</dbReference>
<dbReference type="SUPFAM" id="SSF74982">
    <property type="entry name" value="Small protein B (SmpB)"/>
    <property type="match status" value="1"/>
</dbReference>
<dbReference type="PROSITE" id="PS01317">
    <property type="entry name" value="SSRP"/>
    <property type="match status" value="1"/>
</dbReference>
<feature type="chain" id="PRO_0000331112" description="SsrA-binding protein">
    <location>
        <begin position="1"/>
        <end position="160"/>
    </location>
</feature>
<proteinExistence type="inferred from homology"/>
<protein>
    <recommendedName>
        <fullName evidence="1">SsrA-binding protein</fullName>
    </recommendedName>
    <alternativeName>
        <fullName evidence="1">Small protein B</fullName>
    </alternativeName>
</protein>